<keyword id="KW-0167">Capsid protein</keyword>
<keyword id="KW-1139">Helical capsid protein</keyword>
<keyword id="KW-1048">Host nucleus</keyword>
<keyword id="KW-0945">Host-virus interaction</keyword>
<keyword id="KW-0687">Ribonucleoprotein</keyword>
<keyword id="KW-0694">RNA-binding</keyword>
<keyword id="KW-0543">Viral nucleoprotein</keyword>
<keyword id="KW-1163">Viral penetration into host nucleus</keyword>
<keyword id="KW-0946">Virion</keyword>
<keyword id="KW-1160">Virus entry into host cell</keyword>
<dbReference type="EMBL" id="CY021056">
    <property type="protein sequence ID" value="ABO52284.1"/>
    <property type="molecule type" value="Viral_cRNA"/>
</dbReference>
<dbReference type="SMR" id="A4K147"/>
<dbReference type="PRO" id="PR:A4K147"/>
<dbReference type="Proteomes" id="UP000008219">
    <property type="component" value="Genome"/>
</dbReference>
<dbReference type="GO" id="GO:0019029">
    <property type="term" value="C:helical viral capsid"/>
    <property type="evidence" value="ECO:0007669"/>
    <property type="project" value="UniProtKB-UniRule"/>
</dbReference>
<dbReference type="GO" id="GO:0043657">
    <property type="term" value="C:host cell"/>
    <property type="evidence" value="ECO:0007669"/>
    <property type="project" value="GOC"/>
</dbReference>
<dbReference type="GO" id="GO:0042025">
    <property type="term" value="C:host cell nucleus"/>
    <property type="evidence" value="ECO:0007669"/>
    <property type="project" value="UniProtKB-SubCell"/>
</dbReference>
<dbReference type="GO" id="GO:1990904">
    <property type="term" value="C:ribonucleoprotein complex"/>
    <property type="evidence" value="ECO:0007669"/>
    <property type="project" value="UniProtKB-KW"/>
</dbReference>
<dbReference type="GO" id="GO:0019013">
    <property type="term" value="C:viral nucleocapsid"/>
    <property type="evidence" value="ECO:0007669"/>
    <property type="project" value="UniProtKB-UniRule"/>
</dbReference>
<dbReference type="GO" id="GO:0003723">
    <property type="term" value="F:RNA binding"/>
    <property type="evidence" value="ECO:0007669"/>
    <property type="project" value="UniProtKB-UniRule"/>
</dbReference>
<dbReference type="GO" id="GO:0005198">
    <property type="term" value="F:structural molecule activity"/>
    <property type="evidence" value="ECO:0007669"/>
    <property type="project" value="UniProtKB-UniRule"/>
</dbReference>
<dbReference type="GO" id="GO:0046718">
    <property type="term" value="P:symbiont entry into host cell"/>
    <property type="evidence" value="ECO:0007669"/>
    <property type="project" value="UniProtKB-KW"/>
</dbReference>
<dbReference type="GO" id="GO:0075732">
    <property type="term" value="P:viral penetration into host nucleus"/>
    <property type="evidence" value="ECO:0007669"/>
    <property type="project" value="UniProtKB-UniRule"/>
</dbReference>
<dbReference type="HAMAP" id="MF_04070">
    <property type="entry name" value="INFV_NCAP"/>
    <property type="match status" value="1"/>
</dbReference>
<dbReference type="InterPro" id="IPR002141">
    <property type="entry name" value="Flu_NP"/>
</dbReference>
<dbReference type="Pfam" id="PF00506">
    <property type="entry name" value="Flu_NP"/>
    <property type="match status" value="1"/>
</dbReference>
<dbReference type="SUPFAM" id="SSF161003">
    <property type="entry name" value="flu NP-like"/>
    <property type="match status" value="1"/>
</dbReference>
<accession>A4K147</accession>
<protein>
    <recommendedName>
        <fullName evidence="1">Nucleoprotein</fullName>
    </recommendedName>
    <alternativeName>
        <fullName evidence="1">Nucleocapsid protein</fullName>
        <shortName evidence="1">Protein N</shortName>
    </alternativeName>
</protein>
<proteinExistence type="inferred from homology"/>
<feature type="chain" id="PRO_0000372939" description="Nucleoprotein">
    <location>
        <begin position="1"/>
        <end position="498"/>
    </location>
</feature>
<feature type="region of interest" description="Disordered" evidence="2">
    <location>
        <begin position="1"/>
        <end position="21"/>
    </location>
</feature>
<feature type="short sequence motif" description="Unconventional nuclear localization signal" evidence="1">
    <location>
        <begin position="1"/>
        <end position="18"/>
    </location>
</feature>
<feature type="short sequence motif" description="Bipartite nuclear localization signal" evidence="1">
    <location>
        <begin position="198"/>
        <end position="216"/>
    </location>
</feature>
<feature type="compositionally biased region" description="Basic and acidic residues" evidence="2">
    <location>
        <begin position="8"/>
        <end position="21"/>
    </location>
</feature>
<name>NCAP_I54A2</name>
<organism>
    <name type="scientific">Influenza A virus (strain A/Malaysia:Malaya/302/1954 H1N1)</name>
    <dbReference type="NCBI Taxonomy" id="425566"/>
    <lineage>
        <taxon>Viruses</taxon>
        <taxon>Riboviria</taxon>
        <taxon>Orthornavirae</taxon>
        <taxon>Negarnaviricota</taxon>
        <taxon>Polyploviricotina</taxon>
        <taxon>Insthoviricetes</taxon>
        <taxon>Articulavirales</taxon>
        <taxon>Orthomyxoviridae</taxon>
        <taxon>Alphainfluenzavirus</taxon>
        <taxon>Alphainfluenzavirus influenzae</taxon>
        <taxon>Influenza A virus</taxon>
    </lineage>
</organism>
<sequence>MASQGTKRSYEQMETDGERQNATEIRASVGKMIDGIGRFYIQMCTELKLSDYEGRLIQNSLTIERMVLSAFDERRNKYLEEHPSAGKDPKKTGGPIYKRVDRKWMRELVLYDKEEIRRIWRQANNGDDATAGLTHMMIWHSNLNDTTYQRTRALVRTGMDPRMCSLMQGSTLPRRSGAAGAAVKGVGTMVMELIRMIKRGINDRNFWRGENGRKTRIAYERMCNILKGKFQTAAQRAMMDQVRESRNPGNAEIEDLIFLARSALILRGSVAHKSCLPACVYGPAVASGYDFEKEGYSLVGIDPFKLLQNSQVYSLIRPNENPAHKSQLVWMACNSAAFEDLRVSSFIRGTKVIPRGKLSTRGVQIASNENMDTMESSTLELRSRYWAIRTRSGGNTNQQRASAGQISIQPTFSVQRNLPFDKTTIMAAFTGNAEGRTSDMRAEIIRMMESAKPEEVSFQGRGVFELSDEKAANPIVPSFDMSNEGSYFFGDNAEEYDN</sequence>
<gene>
    <name evidence="1" type="primary">NP</name>
</gene>
<reference key="1">
    <citation type="submission" date="2007-03" db="EMBL/GenBank/DDBJ databases">
        <title>The NIAID influenza genome sequencing project.</title>
        <authorList>
            <person name="Ghedin E."/>
            <person name="Spiro D."/>
            <person name="Miller N."/>
            <person name="Zaborsky J."/>
            <person name="Feldblyum T."/>
            <person name="Subbu V."/>
            <person name="Shumway M."/>
            <person name="Sparenborg J."/>
            <person name="Groveman L."/>
            <person name="Halpin R."/>
            <person name="Sitz J."/>
            <person name="Koo H."/>
            <person name="Salzberg S.L."/>
            <person name="Webster R.G."/>
            <person name="Hoffmann E."/>
            <person name="Krauss S."/>
            <person name="Naeve C."/>
            <person name="Bao Y."/>
            <person name="Bolotov P."/>
            <person name="Dernovoy D."/>
            <person name="Kiryutin B."/>
            <person name="Lipman D.J."/>
            <person name="Tatusova T."/>
        </authorList>
    </citation>
    <scope>NUCLEOTIDE SEQUENCE [GENOMIC RNA]</scope>
</reference>
<reference key="2">
    <citation type="submission" date="2007-03" db="EMBL/GenBank/DDBJ databases">
        <authorList>
            <consortium name="The NIAID Influenza Genome Sequencing Consortium"/>
        </authorList>
    </citation>
    <scope>NUCLEOTIDE SEQUENCE [GENOMIC RNA]</scope>
</reference>
<evidence type="ECO:0000255" key="1">
    <source>
        <dbReference type="HAMAP-Rule" id="MF_04070"/>
    </source>
</evidence>
<evidence type="ECO:0000256" key="2">
    <source>
        <dbReference type="SAM" id="MobiDB-lite"/>
    </source>
</evidence>
<organismHost>
    <name type="scientific">Aves</name>
    <dbReference type="NCBI Taxonomy" id="8782"/>
</organismHost>
<organismHost>
    <name type="scientific">Homo sapiens</name>
    <name type="common">Human</name>
    <dbReference type="NCBI Taxonomy" id="9606"/>
</organismHost>
<organismHost>
    <name type="scientific">Sus scrofa</name>
    <name type="common">Pig</name>
    <dbReference type="NCBI Taxonomy" id="9823"/>
</organismHost>
<comment type="function">
    <text evidence="1">Encapsidates the negative strand viral RNA, protecting it from nucleases. The encapsidated genomic RNA is termed the ribonucleoprotein (RNP) and serves as template for transcription and replication. The RNP needs to be localized in the host nucleus to start an infectious cycle, but is too large to diffuse through the nuclear pore complex. NP comprises at least 2 nuclear localization signals that are responsible for the active RNP import into the nucleus through cellular importin alpha/beta pathway. Later in the infection, nclear export of RNPs are mediated through viral proteins NEP interacting with M1 which binds nucleoproteins. It is possible that nucleoprotein binds directly host exportin-1/XPO1 and plays an active role in RNPs nuclear export. M1 interaction with RNP seems to hide nucleoprotein's nuclear localization signals. Soon after a virion infects a new cell, M1 dissociates from the RNP under acidification of the virion driven by M2 protein. Dissociation of M1 from RNP unmasks nucleoprotein's nuclear localization signals, targeting the RNP to the nucleus.</text>
</comment>
<comment type="subunit">
    <text evidence="1">Homomultimerizes to form the nucleocapsid. May bind host exportin-1/XPO1. Binds to viral genomic RNA. Protein-RNA contacts are mediated by a combination of electrostatic interactions between positively charged residues and the phosphate backbone and planar interactions between aromatic side chains and bases.</text>
</comment>
<comment type="subcellular location">
    <subcellularLocation>
        <location evidence="1">Virion</location>
    </subcellularLocation>
    <subcellularLocation>
        <location evidence="1">Host nucleus</location>
    </subcellularLocation>
</comment>
<comment type="PTM">
    <text evidence="1">Late in virus-infected cells, may be cleaved from a 56-kDa protein to a 53-kDa protein by a cellular caspase. This cleavage might be a marker for the onset of apoptosis in infected cells or have a specific function in virus host interaction.</text>
</comment>
<comment type="similarity">
    <text evidence="1">Belongs to the influenza viruses nucleoprotein family.</text>
</comment>